<evidence type="ECO:0000255" key="1">
    <source>
        <dbReference type="HAMAP-Rule" id="MF_00371"/>
    </source>
</evidence>
<evidence type="ECO:0000305" key="2"/>
<feature type="chain" id="PRO_1000205581" description="Small ribosomal subunit protein eS27">
    <location>
        <begin position="1"/>
        <end position="65"/>
    </location>
</feature>
<feature type="zinc finger region" description="C4-type" evidence="1">
    <location>
        <begin position="20"/>
        <end position="42"/>
    </location>
</feature>
<feature type="binding site" evidence="1">
    <location>
        <position position="20"/>
    </location>
    <ligand>
        <name>Zn(2+)</name>
        <dbReference type="ChEBI" id="CHEBI:29105"/>
    </ligand>
</feature>
<feature type="binding site" evidence="1">
    <location>
        <position position="23"/>
    </location>
    <ligand>
        <name>Zn(2+)</name>
        <dbReference type="ChEBI" id="CHEBI:29105"/>
    </ligand>
</feature>
<feature type="binding site" evidence="1">
    <location>
        <position position="39"/>
    </location>
    <ligand>
        <name>Zn(2+)</name>
        <dbReference type="ChEBI" id="CHEBI:29105"/>
    </ligand>
</feature>
<feature type="binding site" evidence="1">
    <location>
        <position position="42"/>
    </location>
    <ligand>
        <name>Zn(2+)</name>
        <dbReference type="ChEBI" id="CHEBI:29105"/>
    </ligand>
</feature>
<reference key="1">
    <citation type="journal article" date="2007" name="Genome Biol.">
        <title>Genome analysis and genome-wide proteomics of Thermococcus gammatolerans, the most radioresistant organism known amongst the Archaea.</title>
        <authorList>
            <person name="Zivanovic Y."/>
            <person name="Armengaud J."/>
            <person name="Lagorce A."/>
            <person name="Leplat C."/>
            <person name="Guerin P."/>
            <person name="Dutertre M."/>
            <person name="Anthouard V."/>
            <person name="Forterre P."/>
            <person name="Wincker P."/>
            <person name="Confalonieri F."/>
        </authorList>
    </citation>
    <scope>NUCLEOTIDE SEQUENCE [LARGE SCALE GENOMIC DNA]</scope>
    <source>
        <strain>DSM 15229 / JCM 11827 / EJ3</strain>
    </source>
</reference>
<keyword id="KW-0479">Metal-binding</keyword>
<keyword id="KW-1185">Reference proteome</keyword>
<keyword id="KW-0687">Ribonucleoprotein</keyword>
<keyword id="KW-0689">Ribosomal protein</keyword>
<keyword id="KW-0862">Zinc</keyword>
<keyword id="KW-0863">Zinc-finger</keyword>
<sequence>MALPKNLIPMPRSRFLRVKCIDCGNEQIVFSHPATKVRCLVCGATLVEPTGGKGVIKAKILEVLE</sequence>
<accession>C5A6X9</accession>
<protein>
    <recommendedName>
        <fullName evidence="1">Small ribosomal subunit protein eS27</fullName>
    </recommendedName>
    <alternativeName>
        <fullName evidence="2">30S ribosomal protein S27e</fullName>
    </alternativeName>
</protein>
<dbReference type="EMBL" id="CP001398">
    <property type="protein sequence ID" value="ACS33991.1"/>
    <property type="molecule type" value="Genomic_DNA"/>
</dbReference>
<dbReference type="RefSeq" id="WP_015859102.1">
    <property type="nucleotide sequence ID" value="NC_012804.1"/>
</dbReference>
<dbReference type="SMR" id="C5A6X9"/>
<dbReference type="STRING" id="593117.TGAM_1489"/>
<dbReference type="PaxDb" id="593117-TGAM_1489"/>
<dbReference type="KEGG" id="tga:TGAM_1489"/>
<dbReference type="PATRIC" id="fig|593117.10.peg.1491"/>
<dbReference type="eggNOG" id="arCOG04108">
    <property type="taxonomic scope" value="Archaea"/>
</dbReference>
<dbReference type="HOGENOM" id="CLU_199465_0_0_2"/>
<dbReference type="OrthoDB" id="5718at2157"/>
<dbReference type="Proteomes" id="UP000001488">
    <property type="component" value="Chromosome"/>
</dbReference>
<dbReference type="GO" id="GO:1990904">
    <property type="term" value="C:ribonucleoprotein complex"/>
    <property type="evidence" value="ECO:0007669"/>
    <property type="project" value="UniProtKB-KW"/>
</dbReference>
<dbReference type="GO" id="GO:0005840">
    <property type="term" value="C:ribosome"/>
    <property type="evidence" value="ECO:0007669"/>
    <property type="project" value="UniProtKB-KW"/>
</dbReference>
<dbReference type="GO" id="GO:0003735">
    <property type="term" value="F:structural constituent of ribosome"/>
    <property type="evidence" value="ECO:0007669"/>
    <property type="project" value="InterPro"/>
</dbReference>
<dbReference type="GO" id="GO:0008270">
    <property type="term" value="F:zinc ion binding"/>
    <property type="evidence" value="ECO:0007669"/>
    <property type="project" value="UniProtKB-UniRule"/>
</dbReference>
<dbReference type="GO" id="GO:0006412">
    <property type="term" value="P:translation"/>
    <property type="evidence" value="ECO:0007669"/>
    <property type="project" value="UniProtKB-UniRule"/>
</dbReference>
<dbReference type="FunFam" id="2.20.25.100:FF:000002">
    <property type="entry name" value="30S ribosomal protein S27e"/>
    <property type="match status" value="1"/>
</dbReference>
<dbReference type="Gene3D" id="2.20.25.100">
    <property type="entry name" value="Zn-binding ribosomal proteins"/>
    <property type="match status" value="1"/>
</dbReference>
<dbReference type="HAMAP" id="MF_00371">
    <property type="entry name" value="Ribosomal_eS27"/>
    <property type="match status" value="1"/>
</dbReference>
<dbReference type="InterPro" id="IPR000592">
    <property type="entry name" value="Ribosomal_eS27"/>
</dbReference>
<dbReference type="InterPro" id="IPR023407">
    <property type="entry name" value="Ribosomal_eS27_Zn-bd_dom_sf"/>
</dbReference>
<dbReference type="InterPro" id="IPR011332">
    <property type="entry name" value="Ribosomal_zn-bd"/>
</dbReference>
<dbReference type="NCBIfam" id="NF001629">
    <property type="entry name" value="PRK00415.1"/>
    <property type="match status" value="1"/>
</dbReference>
<dbReference type="PANTHER" id="PTHR11594">
    <property type="entry name" value="40S RIBOSOMAL PROTEIN S27"/>
    <property type="match status" value="1"/>
</dbReference>
<dbReference type="Pfam" id="PF01667">
    <property type="entry name" value="Ribosomal_S27e"/>
    <property type="match status" value="1"/>
</dbReference>
<dbReference type="SUPFAM" id="SSF57829">
    <property type="entry name" value="Zn-binding ribosomal proteins"/>
    <property type="match status" value="1"/>
</dbReference>
<dbReference type="PROSITE" id="PS01168">
    <property type="entry name" value="RIBOSOMAL_S27E"/>
    <property type="match status" value="1"/>
</dbReference>
<proteinExistence type="inferred from homology"/>
<gene>
    <name evidence="1" type="primary">rps27e</name>
    <name type="ordered locus">TGAM_1489</name>
</gene>
<organism>
    <name type="scientific">Thermococcus gammatolerans (strain DSM 15229 / JCM 11827 / EJ3)</name>
    <dbReference type="NCBI Taxonomy" id="593117"/>
    <lineage>
        <taxon>Archaea</taxon>
        <taxon>Methanobacteriati</taxon>
        <taxon>Methanobacteriota</taxon>
        <taxon>Thermococci</taxon>
        <taxon>Thermococcales</taxon>
        <taxon>Thermococcaceae</taxon>
        <taxon>Thermococcus</taxon>
    </lineage>
</organism>
<name>RS27_THEGJ</name>
<comment type="cofactor">
    <cofactor evidence="1">
        <name>Zn(2+)</name>
        <dbReference type="ChEBI" id="CHEBI:29105"/>
    </cofactor>
    <text evidence="1">Binds 1 zinc ion per subunit.</text>
</comment>
<comment type="subunit">
    <text evidence="1">Part of the 30S ribosomal subunit.</text>
</comment>
<comment type="similarity">
    <text evidence="1">Belongs to the eukaryotic ribosomal protein eS27 family.</text>
</comment>